<sequence length="549" mass="61476">MNWRRIVWLLALVTLPTLAEETPLQLVLRGAQHDQLYQLSSSGVTKVSALPDSLTTPLGSLWKLYVYAWLEDTHQPEQPYQCRGNSPEEVYCCQAGESITRDTALVRSCGLYFAPQRLHIGADVWGQYWQQRQAPAWLASLTTLKPETSVTVKSLLDSLATLPAQNKAQEVLLDVVLDEAKIGVASMLGSRVRVKTWSWFADDKQEIRQGGFAGWLTDGTPLWVTGSGTSKTVLTRYATVLNRVLPVPTQVASGQCVEVELFARYPLKKITAEKSTTAVNPGVLNGRYRVTFTNGNHITFVSHGETTLLSEKGKLKLQSHLDREEYVARVLDREAKSTPPEAAKAMTVAIRTFLQQNANREGDCLTIPDSSATQRVSASPATTGARTMTAWTQDLIYAGDPVHYHGSRATEGTLSWRQATAQAGQGERYDQILAFAYPDNSLSRWGAPRSTCQLLPKAKAWLAKKMPQWRRILQAETGYNEPDVFAVCRLVSGFPYTDRQQKRLFIRNFFTLQDRLDLTHEYLHLAFDGYPTGLDENYIETLTRQLLMD</sequence>
<feature type="signal peptide" evidence="1">
    <location>
        <begin position="1"/>
        <end position="19"/>
    </location>
</feature>
<feature type="chain" id="PRO_0000013876" description="Uncharacterized protein YfaQ">
    <location>
        <begin position="20"/>
        <end position="549"/>
    </location>
</feature>
<reference key="1">
    <citation type="journal article" date="1997" name="Science">
        <title>The complete genome sequence of Escherichia coli K-12.</title>
        <authorList>
            <person name="Blattner F.R."/>
            <person name="Plunkett G. III"/>
            <person name="Bloch C.A."/>
            <person name="Perna N.T."/>
            <person name="Burland V."/>
            <person name="Riley M."/>
            <person name="Collado-Vides J."/>
            <person name="Glasner J.D."/>
            <person name="Rode C.K."/>
            <person name="Mayhew G.F."/>
            <person name="Gregor J."/>
            <person name="Davis N.W."/>
            <person name="Kirkpatrick H.A."/>
            <person name="Goeden M.A."/>
            <person name="Rose D.J."/>
            <person name="Mau B."/>
            <person name="Shao Y."/>
        </authorList>
    </citation>
    <scope>NUCLEOTIDE SEQUENCE [LARGE SCALE GENOMIC DNA]</scope>
    <source>
        <strain>K12 / MG1655 / ATCC 47076</strain>
    </source>
</reference>
<reference key="2">
    <citation type="journal article" date="2006" name="Mol. Syst. Biol.">
        <title>Highly accurate genome sequences of Escherichia coli K-12 strains MG1655 and W3110.</title>
        <authorList>
            <person name="Hayashi K."/>
            <person name="Morooka N."/>
            <person name="Yamamoto Y."/>
            <person name="Fujita K."/>
            <person name="Isono K."/>
            <person name="Choi S."/>
            <person name="Ohtsubo E."/>
            <person name="Baba T."/>
            <person name="Wanner B.L."/>
            <person name="Mori H."/>
            <person name="Horiuchi T."/>
        </authorList>
    </citation>
    <scope>NUCLEOTIDE SEQUENCE [LARGE SCALE GENOMIC DNA]</scope>
    <source>
        <strain>K12 / W3110 / ATCC 27325 / DSM 5911</strain>
    </source>
</reference>
<proteinExistence type="inferred from homology"/>
<protein>
    <recommendedName>
        <fullName>Uncharacterized protein YfaQ</fullName>
    </recommendedName>
</protein>
<evidence type="ECO:0000255" key="1"/>
<gene>
    <name type="primary">yfaQ</name>
    <name type="ordered locus">b2226</name>
    <name type="ordered locus">JW2220</name>
</gene>
<organism>
    <name type="scientific">Escherichia coli (strain K12)</name>
    <dbReference type="NCBI Taxonomy" id="83333"/>
    <lineage>
        <taxon>Bacteria</taxon>
        <taxon>Pseudomonadati</taxon>
        <taxon>Pseudomonadota</taxon>
        <taxon>Gammaproteobacteria</taxon>
        <taxon>Enterobacterales</taxon>
        <taxon>Enterobacteriaceae</taxon>
        <taxon>Escherichia</taxon>
    </lineage>
</organism>
<keyword id="KW-1185">Reference proteome</keyword>
<keyword id="KW-0732">Signal</keyword>
<dbReference type="EMBL" id="U00096">
    <property type="protein sequence ID" value="AAC75286.1"/>
    <property type="molecule type" value="Genomic_DNA"/>
</dbReference>
<dbReference type="EMBL" id="AP009048">
    <property type="protein sequence ID" value="BAE76670.1"/>
    <property type="molecule type" value="Genomic_DNA"/>
</dbReference>
<dbReference type="PIR" id="H64992">
    <property type="entry name" value="H64992"/>
</dbReference>
<dbReference type="RefSeq" id="NP_416730.1">
    <property type="nucleotide sequence ID" value="NC_000913.3"/>
</dbReference>
<dbReference type="RefSeq" id="WP_001104549.1">
    <property type="nucleotide sequence ID" value="NZ_LN832404.1"/>
</dbReference>
<dbReference type="BioGRID" id="4261520">
    <property type="interactions" value="17"/>
</dbReference>
<dbReference type="FunCoup" id="P76463">
    <property type="interactions" value="151"/>
</dbReference>
<dbReference type="IntAct" id="P76463">
    <property type="interactions" value="8"/>
</dbReference>
<dbReference type="STRING" id="511145.b2226"/>
<dbReference type="PaxDb" id="511145-b2226"/>
<dbReference type="EnsemblBacteria" id="AAC75286">
    <property type="protein sequence ID" value="AAC75286"/>
    <property type="gene ID" value="b2226"/>
</dbReference>
<dbReference type="GeneID" id="946730"/>
<dbReference type="KEGG" id="ecj:JW2220"/>
<dbReference type="KEGG" id="eco:b2226"/>
<dbReference type="KEGG" id="ecoc:C3026_12440"/>
<dbReference type="PATRIC" id="fig|1411691.4.peg.9"/>
<dbReference type="EchoBASE" id="EB3832"/>
<dbReference type="eggNOG" id="COG5445">
    <property type="taxonomic scope" value="Bacteria"/>
</dbReference>
<dbReference type="HOGENOM" id="CLU_029249_0_0_6"/>
<dbReference type="InParanoid" id="P76463"/>
<dbReference type="OMA" id="SVWKLFV"/>
<dbReference type="OrthoDB" id="7017274at2"/>
<dbReference type="BioCyc" id="EcoCyc:G7153-MONOMER"/>
<dbReference type="PRO" id="PR:P76463"/>
<dbReference type="Proteomes" id="UP000000625">
    <property type="component" value="Chromosome"/>
</dbReference>
<dbReference type="InterPro" id="IPR012338">
    <property type="entry name" value="Beta-lactam/transpept-like"/>
</dbReference>
<dbReference type="InterPro" id="IPR018748">
    <property type="entry name" value="DUF2300_secreted"/>
</dbReference>
<dbReference type="InterPro" id="IPR013693">
    <property type="entry name" value="SpoIID/LytB_N"/>
</dbReference>
<dbReference type="Pfam" id="PF10062">
    <property type="entry name" value="DUF2300"/>
    <property type="match status" value="2"/>
</dbReference>
<dbReference type="Pfam" id="PF08486">
    <property type="entry name" value="SpoIID"/>
    <property type="match status" value="1"/>
</dbReference>
<dbReference type="SUPFAM" id="SSF56601">
    <property type="entry name" value="beta-lactamase/transpeptidase-like"/>
    <property type="match status" value="1"/>
</dbReference>
<accession>P76463</accession>
<accession>Q2MAN6</accession>
<name>YFAQ_ECOLI</name>